<gene>
    <name evidence="1" type="primary">nuoI</name>
    <name type="ordered locus">BPP3383</name>
</gene>
<feature type="chain" id="PRO_0000245702" description="NADH-quinone oxidoreductase subunit I">
    <location>
        <begin position="1"/>
        <end position="162"/>
    </location>
</feature>
<feature type="domain" description="4Fe-4S ferredoxin-type 1" evidence="1">
    <location>
        <begin position="53"/>
        <end position="83"/>
    </location>
</feature>
<feature type="domain" description="4Fe-4S ferredoxin-type 2" evidence="1">
    <location>
        <begin position="93"/>
        <end position="122"/>
    </location>
</feature>
<feature type="binding site" evidence="1">
    <location>
        <position position="63"/>
    </location>
    <ligand>
        <name>[4Fe-4S] cluster</name>
        <dbReference type="ChEBI" id="CHEBI:49883"/>
        <label>1</label>
    </ligand>
</feature>
<feature type="binding site" evidence="1">
    <location>
        <position position="66"/>
    </location>
    <ligand>
        <name>[4Fe-4S] cluster</name>
        <dbReference type="ChEBI" id="CHEBI:49883"/>
        <label>1</label>
    </ligand>
</feature>
<feature type="binding site" evidence="1">
    <location>
        <position position="69"/>
    </location>
    <ligand>
        <name>[4Fe-4S] cluster</name>
        <dbReference type="ChEBI" id="CHEBI:49883"/>
        <label>1</label>
    </ligand>
</feature>
<feature type="binding site" evidence="1">
    <location>
        <position position="73"/>
    </location>
    <ligand>
        <name>[4Fe-4S] cluster</name>
        <dbReference type="ChEBI" id="CHEBI:49883"/>
        <label>2</label>
    </ligand>
</feature>
<feature type="binding site" evidence="1">
    <location>
        <position position="102"/>
    </location>
    <ligand>
        <name>[4Fe-4S] cluster</name>
        <dbReference type="ChEBI" id="CHEBI:49883"/>
        <label>2</label>
    </ligand>
</feature>
<feature type="binding site" evidence="1">
    <location>
        <position position="105"/>
    </location>
    <ligand>
        <name>[4Fe-4S] cluster</name>
        <dbReference type="ChEBI" id="CHEBI:49883"/>
        <label>2</label>
    </ligand>
</feature>
<feature type="binding site" evidence="1">
    <location>
        <position position="108"/>
    </location>
    <ligand>
        <name>[4Fe-4S] cluster</name>
        <dbReference type="ChEBI" id="CHEBI:49883"/>
        <label>2</label>
    </ligand>
</feature>
<feature type="binding site" evidence="1">
    <location>
        <position position="112"/>
    </location>
    <ligand>
        <name>[4Fe-4S] cluster</name>
        <dbReference type="ChEBI" id="CHEBI:49883"/>
        <label>1</label>
    </ligand>
</feature>
<protein>
    <recommendedName>
        <fullName evidence="1">NADH-quinone oxidoreductase subunit I</fullName>
        <ecNumber evidence="1">7.1.1.-</ecNumber>
    </recommendedName>
    <alternativeName>
        <fullName evidence="1">NADH dehydrogenase I subunit I</fullName>
    </alternativeName>
    <alternativeName>
        <fullName evidence="1">NDH-1 subunit I</fullName>
    </alternativeName>
</protein>
<organism>
    <name type="scientific">Bordetella parapertussis (strain 12822 / ATCC BAA-587 / NCTC 13253)</name>
    <dbReference type="NCBI Taxonomy" id="257311"/>
    <lineage>
        <taxon>Bacteria</taxon>
        <taxon>Pseudomonadati</taxon>
        <taxon>Pseudomonadota</taxon>
        <taxon>Betaproteobacteria</taxon>
        <taxon>Burkholderiales</taxon>
        <taxon>Alcaligenaceae</taxon>
        <taxon>Bordetella</taxon>
    </lineage>
</organism>
<proteinExistence type="inferred from homology"/>
<reference key="1">
    <citation type="journal article" date="2003" name="Nat. Genet.">
        <title>Comparative analysis of the genome sequences of Bordetella pertussis, Bordetella parapertussis and Bordetella bronchiseptica.</title>
        <authorList>
            <person name="Parkhill J."/>
            <person name="Sebaihia M."/>
            <person name="Preston A."/>
            <person name="Murphy L.D."/>
            <person name="Thomson N.R."/>
            <person name="Harris D.E."/>
            <person name="Holden M.T.G."/>
            <person name="Churcher C.M."/>
            <person name="Bentley S.D."/>
            <person name="Mungall K.L."/>
            <person name="Cerdeno-Tarraga A.-M."/>
            <person name="Temple L."/>
            <person name="James K.D."/>
            <person name="Harris B."/>
            <person name="Quail M.A."/>
            <person name="Achtman M."/>
            <person name="Atkin R."/>
            <person name="Baker S."/>
            <person name="Basham D."/>
            <person name="Bason N."/>
            <person name="Cherevach I."/>
            <person name="Chillingworth T."/>
            <person name="Collins M."/>
            <person name="Cronin A."/>
            <person name="Davis P."/>
            <person name="Doggett J."/>
            <person name="Feltwell T."/>
            <person name="Goble A."/>
            <person name="Hamlin N."/>
            <person name="Hauser H."/>
            <person name="Holroyd S."/>
            <person name="Jagels K."/>
            <person name="Leather S."/>
            <person name="Moule S."/>
            <person name="Norberczak H."/>
            <person name="O'Neil S."/>
            <person name="Ormond D."/>
            <person name="Price C."/>
            <person name="Rabbinowitsch E."/>
            <person name="Rutter S."/>
            <person name="Sanders M."/>
            <person name="Saunders D."/>
            <person name="Seeger K."/>
            <person name="Sharp S."/>
            <person name="Simmonds M."/>
            <person name="Skelton J."/>
            <person name="Squares R."/>
            <person name="Squares S."/>
            <person name="Stevens K."/>
            <person name="Unwin L."/>
            <person name="Whitehead S."/>
            <person name="Barrell B.G."/>
            <person name="Maskell D.J."/>
        </authorList>
    </citation>
    <scope>NUCLEOTIDE SEQUENCE [LARGE SCALE GENOMIC DNA]</scope>
    <source>
        <strain>12822 / ATCC BAA-587 / NCTC 13253</strain>
    </source>
</reference>
<keyword id="KW-0004">4Fe-4S</keyword>
<keyword id="KW-0997">Cell inner membrane</keyword>
<keyword id="KW-1003">Cell membrane</keyword>
<keyword id="KW-0408">Iron</keyword>
<keyword id="KW-0411">Iron-sulfur</keyword>
<keyword id="KW-0472">Membrane</keyword>
<keyword id="KW-0479">Metal-binding</keyword>
<keyword id="KW-0520">NAD</keyword>
<keyword id="KW-0874">Quinone</keyword>
<keyword id="KW-0677">Repeat</keyword>
<keyword id="KW-1278">Translocase</keyword>
<keyword id="KW-0830">Ubiquinone</keyword>
<sequence>MEAIKDFFGSLLLTELFKGLRLTGKYFFKRKVTLRYPMEKTPTSARFRGLHALRRYPNGEERCIACKLCEAVCPALAITIESEQRDDGTRRTTRYDIDLTKCIFCGFCEESCPVDSIVETHIHEYHGEKRGDLYFTKDMLLAVGDRYEAEIARRRAEDAPYR</sequence>
<accession>Q7W5B5</accession>
<name>NUOI_BORPA</name>
<comment type="function">
    <text evidence="1">NDH-1 shuttles electrons from NADH, via FMN and iron-sulfur (Fe-S) centers, to quinones in the respiratory chain. The immediate electron acceptor for the enzyme in this species is believed to be ubiquinone. Couples the redox reaction to proton translocation (for every two electrons transferred, four hydrogen ions are translocated across the cytoplasmic membrane), and thus conserves the redox energy in a proton gradient.</text>
</comment>
<comment type="catalytic activity">
    <reaction evidence="1">
        <text>a quinone + NADH + 5 H(+)(in) = a quinol + NAD(+) + 4 H(+)(out)</text>
        <dbReference type="Rhea" id="RHEA:57888"/>
        <dbReference type="ChEBI" id="CHEBI:15378"/>
        <dbReference type="ChEBI" id="CHEBI:24646"/>
        <dbReference type="ChEBI" id="CHEBI:57540"/>
        <dbReference type="ChEBI" id="CHEBI:57945"/>
        <dbReference type="ChEBI" id="CHEBI:132124"/>
    </reaction>
</comment>
<comment type="cofactor">
    <cofactor evidence="1">
        <name>[4Fe-4S] cluster</name>
        <dbReference type="ChEBI" id="CHEBI:49883"/>
    </cofactor>
    <text evidence="1">Binds 2 [4Fe-4S] clusters per subunit.</text>
</comment>
<comment type="subunit">
    <text evidence="1">NDH-1 is composed of 14 different subunits. Subunits NuoA, H, J, K, L, M, N constitute the membrane sector of the complex.</text>
</comment>
<comment type="subcellular location">
    <subcellularLocation>
        <location evidence="1">Cell inner membrane</location>
        <topology evidence="1">Peripheral membrane protein</topology>
    </subcellularLocation>
</comment>
<comment type="similarity">
    <text evidence="1">Belongs to the complex I 23 kDa subunit family.</text>
</comment>
<comment type="sequence caution" evidence="2">
    <conflict type="erroneous initiation">
        <sequence resource="EMBL-CDS" id="CAE38668"/>
    </conflict>
</comment>
<dbReference type="EC" id="7.1.1.-" evidence="1"/>
<dbReference type="EMBL" id="BX640433">
    <property type="protein sequence ID" value="CAE38668.1"/>
    <property type="status" value="ALT_INIT"/>
    <property type="molecule type" value="Genomic_DNA"/>
</dbReference>
<dbReference type="RefSeq" id="WP_003813924.1">
    <property type="nucleotide sequence ID" value="NC_002928.3"/>
</dbReference>
<dbReference type="SMR" id="Q7W5B5"/>
<dbReference type="GeneID" id="93205166"/>
<dbReference type="KEGG" id="bpa:BPP3383"/>
<dbReference type="HOGENOM" id="CLU_067218_5_1_4"/>
<dbReference type="Proteomes" id="UP000001421">
    <property type="component" value="Chromosome"/>
</dbReference>
<dbReference type="GO" id="GO:0005886">
    <property type="term" value="C:plasma membrane"/>
    <property type="evidence" value="ECO:0007669"/>
    <property type="project" value="UniProtKB-SubCell"/>
</dbReference>
<dbReference type="GO" id="GO:0051539">
    <property type="term" value="F:4 iron, 4 sulfur cluster binding"/>
    <property type="evidence" value="ECO:0007669"/>
    <property type="project" value="UniProtKB-KW"/>
</dbReference>
<dbReference type="GO" id="GO:0005506">
    <property type="term" value="F:iron ion binding"/>
    <property type="evidence" value="ECO:0007669"/>
    <property type="project" value="UniProtKB-UniRule"/>
</dbReference>
<dbReference type="GO" id="GO:0050136">
    <property type="term" value="F:NADH:ubiquinone reductase (non-electrogenic) activity"/>
    <property type="evidence" value="ECO:0007669"/>
    <property type="project" value="UniProtKB-UniRule"/>
</dbReference>
<dbReference type="GO" id="GO:0048038">
    <property type="term" value="F:quinone binding"/>
    <property type="evidence" value="ECO:0007669"/>
    <property type="project" value="UniProtKB-KW"/>
</dbReference>
<dbReference type="GO" id="GO:0009060">
    <property type="term" value="P:aerobic respiration"/>
    <property type="evidence" value="ECO:0007669"/>
    <property type="project" value="TreeGrafter"/>
</dbReference>
<dbReference type="FunFam" id="3.30.70.3270:FF:000003">
    <property type="entry name" value="NADH-quinone oxidoreductase subunit I"/>
    <property type="match status" value="1"/>
</dbReference>
<dbReference type="Gene3D" id="3.30.70.3270">
    <property type="match status" value="1"/>
</dbReference>
<dbReference type="HAMAP" id="MF_01351">
    <property type="entry name" value="NDH1_NuoI"/>
    <property type="match status" value="1"/>
</dbReference>
<dbReference type="InterPro" id="IPR017896">
    <property type="entry name" value="4Fe4S_Fe-S-bd"/>
</dbReference>
<dbReference type="InterPro" id="IPR017900">
    <property type="entry name" value="4Fe4S_Fe_S_CS"/>
</dbReference>
<dbReference type="InterPro" id="IPR010226">
    <property type="entry name" value="NADH_quinone_OxRdtase_chainI"/>
</dbReference>
<dbReference type="NCBIfam" id="TIGR01971">
    <property type="entry name" value="NuoI"/>
    <property type="match status" value="1"/>
</dbReference>
<dbReference type="NCBIfam" id="NF004538">
    <property type="entry name" value="PRK05888.1-4"/>
    <property type="match status" value="1"/>
</dbReference>
<dbReference type="NCBIfam" id="NF004539">
    <property type="entry name" value="PRK05888.1-5"/>
    <property type="match status" value="1"/>
</dbReference>
<dbReference type="PANTHER" id="PTHR10849:SF20">
    <property type="entry name" value="NADH DEHYDROGENASE [UBIQUINONE] IRON-SULFUR PROTEIN 8, MITOCHONDRIAL"/>
    <property type="match status" value="1"/>
</dbReference>
<dbReference type="PANTHER" id="PTHR10849">
    <property type="entry name" value="NADH DEHYDROGENASE UBIQUINONE IRON-SULFUR PROTEIN 8, MITOCHONDRIAL"/>
    <property type="match status" value="1"/>
</dbReference>
<dbReference type="Pfam" id="PF12838">
    <property type="entry name" value="Fer4_7"/>
    <property type="match status" value="1"/>
</dbReference>
<dbReference type="SUPFAM" id="SSF54862">
    <property type="entry name" value="4Fe-4S ferredoxins"/>
    <property type="match status" value="1"/>
</dbReference>
<dbReference type="PROSITE" id="PS00198">
    <property type="entry name" value="4FE4S_FER_1"/>
    <property type="match status" value="2"/>
</dbReference>
<dbReference type="PROSITE" id="PS51379">
    <property type="entry name" value="4FE4S_FER_2"/>
    <property type="match status" value="2"/>
</dbReference>
<evidence type="ECO:0000255" key="1">
    <source>
        <dbReference type="HAMAP-Rule" id="MF_01351"/>
    </source>
</evidence>
<evidence type="ECO:0000305" key="2"/>